<protein>
    <recommendedName>
        <fullName>Green-sensitive opsin-1</fullName>
    </recommendedName>
    <alternativeName>
        <fullName>Green cone photoreceptor pigment 1</fullName>
    </alternativeName>
    <alternativeName>
        <fullName>Opsin RH2-1</fullName>
    </alternativeName>
    <alternativeName>
        <fullName>Opsin-1, medium-wave-sensitive 1</fullName>
    </alternativeName>
</protein>
<proteinExistence type="evidence at protein level"/>
<dbReference type="EMBL" id="AF109369">
    <property type="protein sequence ID" value="AAD24752.1"/>
    <property type="molecule type" value="mRNA"/>
</dbReference>
<dbReference type="EMBL" id="AB087805">
    <property type="protein sequence ID" value="BAC24129.1"/>
    <property type="molecule type" value="Genomic_DNA"/>
</dbReference>
<dbReference type="EMBL" id="AL732567">
    <property type="protein sequence ID" value="CAD87812.1"/>
    <property type="molecule type" value="Genomic_DNA"/>
</dbReference>
<dbReference type="EMBL" id="BC060896">
    <property type="protein sequence ID" value="AAH60896.1"/>
    <property type="molecule type" value="mRNA"/>
</dbReference>
<dbReference type="RefSeq" id="NP_571328.2">
    <property type="nucleotide sequence ID" value="NM_131253.2"/>
</dbReference>
<dbReference type="SMR" id="Q9W6A5"/>
<dbReference type="FunCoup" id="Q9W6A5">
    <property type="interactions" value="45"/>
</dbReference>
<dbReference type="STRING" id="7955.ENSDARP00000001158"/>
<dbReference type="GlyCosmos" id="Q9W6A5">
    <property type="glycosylation" value="3 sites, No reported glycans"/>
</dbReference>
<dbReference type="PaxDb" id="7955-ENSDARP00000001158"/>
<dbReference type="Ensembl" id="ENSDART00000002046">
    <property type="protein sequence ID" value="ENSDARP00000001158"/>
    <property type="gene ID" value="ENSDARG00000097008"/>
</dbReference>
<dbReference type="GeneID" id="30503"/>
<dbReference type="KEGG" id="dre:30503"/>
<dbReference type="AGR" id="ZFIN:ZDB-GENE-990604-42"/>
<dbReference type="CTD" id="30503"/>
<dbReference type="ZFIN" id="ZDB-GENE-990604-42">
    <property type="gene designation" value="opn1mw1"/>
</dbReference>
<dbReference type="eggNOG" id="KOG3656">
    <property type="taxonomic scope" value="Eukaryota"/>
</dbReference>
<dbReference type="HOGENOM" id="CLU_009579_3_0_1"/>
<dbReference type="InParanoid" id="Q9W6A5"/>
<dbReference type="OrthoDB" id="5962323at2759"/>
<dbReference type="PhylomeDB" id="Q9W6A5"/>
<dbReference type="TreeFam" id="TF324998"/>
<dbReference type="PRO" id="PR:Q9W6A5"/>
<dbReference type="Proteomes" id="UP000000437">
    <property type="component" value="Chromosome 6"/>
</dbReference>
<dbReference type="Bgee" id="ENSDARG00000097008">
    <property type="expression patterns" value="Expressed in larva and 10 other cell types or tissues"/>
</dbReference>
<dbReference type="ExpressionAtlas" id="Q9W6A5">
    <property type="expression patterns" value="baseline and differential"/>
</dbReference>
<dbReference type="GO" id="GO:0001750">
    <property type="term" value="C:photoreceptor outer segment"/>
    <property type="evidence" value="ECO:0000314"/>
    <property type="project" value="ZFIN"/>
</dbReference>
<dbReference type="GO" id="GO:0005886">
    <property type="term" value="C:plasma membrane"/>
    <property type="evidence" value="ECO:0000318"/>
    <property type="project" value="GO_Central"/>
</dbReference>
<dbReference type="GO" id="GO:0008020">
    <property type="term" value="F:G protein-coupled photoreceptor activity"/>
    <property type="evidence" value="ECO:0000318"/>
    <property type="project" value="GO_Central"/>
</dbReference>
<dbReference type="GO" id="GO:0009881">
    <property type="term" value="F:photoreceptor activity"/>
    <property type="evidence" value="ECO:0000303"/>
    <property type="project" value="UniProtKB"/>
</dbReference>
<dbReference type="GO" id="GO:0071482">
    <property type="term" value="P:cellular response to light stimulus"/>
    <property type="evidence" value="ECO:0000318"/>
    <property type="project" value="GO_Central"/>
</dbReference>
<dbReference type="GO" id="GO:0007186">
    <property type="term" value="P:G protein-coupled receptor signaling pathway"/>
    <property type="evidence" value="ECO:0000318"/>
    <property type="project" value="GO_Central"/>
</dbReference>
<dbReference type="GO" id="GO:0007602">
    <property type="term" value="P:phototransduction"/>
    <property type="evidence" value="ECO:0000318"/>
    <property type="project" value="GO_Central"/>
</dbReference>
<dbReference type="GO" id="GO:0007601">
    <property type="term" value="P:visual perception"/>
    <property type="evidence" value="ECO:0000303"/>
    <property type="project" value="UniProtKB"/>
</dbReference>
<dbReference type="FunFam" id="1.20.1070.10:FF:000018">
    <property type="entry name" value="Rhodopsin"/>
    <property type="match status" value="1"/>
</dbReference>
<dbReference type="Gene3D" id="1.20.1070.10">
    <property type="entry name" value="Rhodopsin 7-helix transmembrane proteins"/>
    <property type="match status" value="1"/>
</dbReference>
<dbReference type="InterPro" id="IPR050125">
    <property type="entry name" value="GPCR_opsins"/>
</dbReference>
<dbReference type="InterPro" id="IPR000276">
    <property type="entry name" value="GPCR_Rhodpsn"/>
</dbReference>
<dbReference type="InterPro" id="IPR017452">
    <property type="entry name" value="GPCR_Rhodpsn_7TM"/>
</dbReference>
<dbReference type="InterPro" id="IPR001760">
    <property type="entry name" value="Opsin"/>
</dbReference>
<dbReference type="InterPro" id="IPR027430">
    <property type="entry name" value="Retinal_BS"/>
</dbReference>
<dbReference type="InterPro" id="IPR000732">
    <property type="entry name" value="Rhodopsin"/>
</dbReference>
<dbReference type="InterPro" id="IPR019477">
    <property type="entry name" value="Rhodopsin_N"/>
</dbReference>
<dbReference type="PANTHER" id="PTHR24240">
    <property type="entry name" value="OPSIN"/>
    <property type="match status" value="1"/>
</dbReference>
<dbReference type="Pfam" id="PF00001">
    <property type="entry name" value="7tm_1"/>
    <property type="match status" value="1"/>
</dbReference>
<dbReference type="Pfam" id="PF10413">
    <property type="entry name" value="Rhodopsin_N"/>
    <property type="match status" value="1"/>
</dbReference>
<dbReference type="PRINTS" id="PR00237">
    <property type="entry name" value="GPCRRHODOPSN"/>
</dbReference>
<dbReference type="PRINTS" id="PR00238">
    <property type="entry name" value="OPSIN"/>
</dbReference>
<dbReference type="PRINTS" id="PR00579">
    <property type="entry name" value="RHODOPSIN"/>
</dbReference>
<dbReference type="SMART" id="SM01381">
    <property type="entry name" value="7TM_GPCR_Srsx"/>
    <property type="match status" value="1"/>
</dbReference>
<dbReference type="SUPFAM" id="SSF81321">
    <property type="entry name" value="Family A G protein-coupled receptor-like"/>
    <property type="match status" value="1"/>
</dbReference>
<dbReference type="PROSITE" id="PS00237">
    <property type="entry name" value="G_PROTEIN_RECEP_F1_1"/>
    <property type="match status" value="1"/>
</dbReference>
<dbReference type="PROSITE" id="PS50262">
    <property type="entry name" value="G_PROTEIN_RECEP_F1_2"/>
    <property type="match status" value="1"/>
</dbReference>
<dbReference type="PROSITE" id="PS00238">
    <property type="entry name" value="OPSIN"/>
    <property type="match status" value="1"/>
</dbReference>
<evidence type="ECO:0000250" key="1"/>
<evidence type="ECO:0000255" key="2"/>
<evidence type="ECO:0000255" key="3">
    <source>
        <dbReference type="PROSITE-ProRule" id="PRU00521"/>
    </source>
</evidence>
<evidence type="ECO:0000256" key="4">
    <source>
        <dbReference type="SAM" id="MobiDB-lite"/>
    </source>
</evidence>
<evidence type="ECO:0000269" key="5">
    <source>
    </source>
</evidence>
<evidence type="ECO:0000269" key="6">
    <source>
    </source>
</evidence>
<evidence type="ECO:0000305" key="7"/>
<comment type="function">
    <text>Visual pigments are the light-absorbing molecules that mediate vision. They consist of an apoprotein, opsin, covalently linked to cis-retinal.</text>
</comment>
<comment type="biophysicochemical properties">
    <absorption>
        <max evidence="6">467 nm</max>
    </absorption>
</comment>
<comment type="subcellular location">
    <subcellularLocation>
        <location>Membrane</location>
        <topology>Multi-pass membrane protein</topology>
    </subcellularLocation>
</comment>
<comment type="tissue specificity">
    <text evidence="5">Retinal double cone accessory photoreceptor cell outer segments.</text>
</comment>
<comment type="PTM">
    <text evidence="1">Phosphorylated on some or all of the serine and threonine residues present in the C-terminal region.</text>
</comment>
<comment type="similarity">
    <text evidence="3">Belongs to the G-protein coupled receptor 1 family. Opsin subfamily.</text>
</comment>
<sequence>MNGTEGSNFYIPMSNRTGLVRSPYDYTQYYLAEPWKFKALAFYMFLLIIFGFPINVLTLVVTAQHKKLRQPLNYILVNLAFAGTIMVIFGFTVSFYCSLVGYMALGPLGCVMEGFFATLGGQVALWSLVVLAIERYIVVCKPMGSFKFSANHAMAGIAFTWFMACSCAVPPLFGWSRYLPEGMQTSCGPDYYTLNPEYNNESYVMYMFSCHFCIPVTTIFFTYGSLVCTVKAAAAQQQESESTQKAEREVTRMVILMVLGFLFAWVPYASFAAWIFFNRGAAFSAQAMAVPAFFSKTSAVFNPIIYVLLNKQFRSCMLNTLFCGKSPLGDDESSSVSTSKTEVSSVSPA</sequence>
<gene>
    <name type="primary">opn1mw1</name>
    <name type="synonym">grops1</name>
    <name type="synonym">rh21</name>
</gene>
<keyword id="KW-0157">Chromophore</keyword>
<keyword id="KW-1015">Disulfide bond</keyword>
<keyword id="KW-0297">G-protein coupled receptor</keyword>
<keyword id="KW-0325">Glycoprotein</keyword>
<keyword id="KW-0472">Membrane</keyword>
<keyword id="KW-0597">Phosphoprotein</keyword>
<keyword id="KW-0600">Photoreceptor protein</keyword>
<keyword id="KW-0675">Receptor</keyword>
<keyword id="KW-1185">Reference proteome</keyword>
<keyword id="KW-0681">Retinal protein</keyword>
<keyword id="KW-0716">Sensory transduction</keyword>
<keyword id="KW-0807">Transducer</keyword>
<keyword id="KW-0812">Transmembrane</keyword>
<keyword id="KW-1133">Transmembrane helix</keyword>
<keyword id="KW-0844">Vision</keyword>
<organism>
    <name type="scientific">Danio rerio</name>
    <name type="common">Zebrafish</name>
    <name type="synonym">Brachydanio rerio</name>
    <dbReference type="NCBI Taxonomy" id="7955"/>
    <lineage>
        <taxon>Eukaryota</taxon>
        <taxon>Metazoa</taxon>
        <taxon>Chordata</taxon>
        <taxon>Craniata</taxon>
        <taxon>Vertebrata</taxon>
        <taxon>Euteleostomi</taxon>
        <taxon>Actinopterygii</taxon>
        <taxon>Neopterygii</taxon>
        <taxon>Teleostei</taxon>
        <taxon>Ostariophysi</taxon>
        <taxon>Cypriniformes</taxon>
        <taxon>Danionidae</taxon>
        <taxon>Danioninae</taxon>
        <taxon>Danio</taxon>
    </lineage>
</organism>
<name>OPSG1_DANRE</name>
<accession>Q9W6A5</accession>
<accession>Q8AYM9</accession>
<reference key="1">
    <citation type="journal article" date="1999" name="Vis. Neurosci.">
        <title>Cloning and characterization of six zebrafish photoreceptor opsin cDNAs and immunolocalization of their corresponding proteins.</title>
        <authorList>
            <person name="Vihtelic T.S."/>
            <person name="Doro C.J."/>
            <person name="Hyde D.R."/>
        </authorList>
    </citation>
    <scope>NUCLEOTIDE SEQUENCE [MRNA]</scope>
    <scope>TISSUE SPECIFICITY</scope>
    <source>
        <tissue>Eye</tissue>
    </source>
</reference>
<reference key="2">
    <citation type="journal article" date="2003" name="Genetics">
        <title>Gene duplication and spectral diversification of cone visual pigments of zebrafish.</title>
        <authorList>
            <person name="Chinen A."/>
            <person name="Hamaoka T."/>
            <person name="Yamada Y."/>
            <person name="Kawamura S."/>
        </authorList>
    </citation>
    <scope>NUCLEOTIDE SEQUENCE [GENOMIC DNA / MRNA]</scope>
    <scope>BIOPHYSICOCHEMICAL PROPERTIES</scope>
    <source>
        <strain>AB</strain>
        <tissue>Eye</tissue>
    </source>
</reference>
<reference key="3">
    <citation type="journal article" date="2013" name="Nature">
        <title>The zebrafish reference genome sequence and its relationship to the human genome.</title>
        <authorList>
            <person name="Howe K."/>
            <person name="Clark M.D."/>
            <person name="Torroja C.F."/>
            <person name="Torrance J."/>
            <person name="Berthelot C."/>
            <person name="Muffato M."/>
            <person name="Collins J.E."/>
            <person name="Humphray S."/>
            <person name="McLaren K."/>
            <person name="Matthews L."/>
            <person name="McLaren S."/>
            <person name="Sealy I."/>
            <person name="Caccamo M."/>
            <person name="Churcher C."/>
            <person name="Scott C."/>
            <person name="Barrett J.C."/>
            <person name="Koch R."/>
            <person name="Rauch G.J."/>
            <person name="White S."/>
            <person name="Chow W."/>
            <person name="Kilian B."/>
            <person name="Quintais L.T."/>
            <person name="Guerra-Assuncao J.A."/>
            <person name="Zhou Y."/>
            <person name="Gu Y."/>
            <person name="Yen J."/>
            <person name="Vogel J.H."/>
            <person name="Eyre T."/>
            <person name="Redmond S."/>
            <person name="Banerjee R."/>
            <person name="Chi J."/>
            <person name="Fu B."/>
            <person name="Langley E."/>
            <person name="Maguire S.F."/>
            <person name="Laird G.K."/>
            <person name="Lloyd D."/>
            <person name="Kenyon E."/>
            <person name="Donaldson S."/>
            <person name="Sehra H."/>
            <person name="Almeida-King J."/>
            <person name="Loveland J."/>
            <person name="Trevanion S."/>
            <person name="Jones M."/>
            <person name="Quail M."/>
            <person name="Willey D."/>
            <person name="Hunt A."/>
            <person name="Burton J."/>
            <person name="Sims S."/>
            <person name="McLay K."/>
            <person name="Plumb B."/>
            <person name="Davis J."/>
            <person name="Clee C."/>
            <person name="Oliver K."/>
            <person name="Clark R."/>
            <person name="Riddle C."/>
            <person name="Elliot D."/>
            <person name="Threadgold G."/>
            <person name="Harden G."/>
            <person name="Ware D."/>
            <person name="Begum S."/>
            <person name="Mortimore B."/>
            <person name="Kerry G."/>
            <person name="Heath P."/>
            <person name="Phillimore B."/>
            <person name="Tracey A."/>
            <person name="Corby N."/>
            <person name="Dunn M."/>
            <person name="Johnson C."/>
            <person name="Wood J."/>
            <person name="Clark S."/>
            <person name="Pelan S."/>
            <person name="Griffiths G."/>
            <person name="Smith M."/>
            <person name="Glithero R."/>
            <person name="Howden P."/>
            <person name="Barker N."/>
            <person name="Lloyd C."/>
            <person name="Stevens C."/>
            <person name="Harley J."/>
            <person name="Holt K."/>
            <person name="Panagiotidis G."/>
            <person name="Lovell J."/>
            <person name="Beasley H."/>
            <person name="Henderson C."/>
            <person name="Gordon D."/>
            <person name="Auger K."/>
            <person name="Wright D."/>
            <person name="Collins J."/>
            <person name="Raisen C."/>
            <person name="Dyer L."/>
            <person name="Leung K."/>
            <person name="Robertson L."/>
            <person name="Ambridge K."/>
            <person name="Leongamornlert D."/>
            <person name="McGuire S."/>
            <person name="Gilderthorp R."/>
            <person name="Griffiths C."/>
            <person name="Manthravadi D."/>
            <person name="Nichol S."/>
            <person name="Barker G."/>
            <person name="Whitehead S."/>
            <person name="Kay M."/>
            <person name="Brown J."/>
            <person name="Murnane C."/>
            <person name="Gray E."/>
            <person name="Humphries M."/>
            <person name="Sycamore N."/>
            <person name="Barker D."/>
            <person name="Saunders D."/>
            <person name="Wallis J."/>
            <person name="Babbage A."/>
            <person name="Hammond S."/>
            <person name="Mashreghi-Mohammadi M."/>
            <person name="Barr L."/>
            <person name="Martin S."/>
            <person name="Wray P."/>
            <person name="Ellington A."/>
            <person name="Matthews N."/>
            <person name="Ellwood M."/>
            <person name="Woodmansey R."/>
            <person name="Clark G."/>
            <person name="Cooper J."/>
            <person name="Tromans A."/>
            <person name="Grafham D."/>
            <person name="Skuce C."/>
            <person name="Pandian R."/>
            <person name="Andrews R."/>
            <person name="Harrison E."/>
            <person name="Kimberley A."/>
            <person name="Garnett J."/>
            <person name="Fosker N."/>
            <person name="Hall R."/>
            <person name="Garner P."/>
            <person name="Kelly D."/>
            <person name="Bird C."/>
            <person name="Palmer S."/>
            <person name="Gehring I."/>
            <person name="Berger A."/>
            <person name="Dooley C.M."/>
            <person name="Ersan-Urun Z."/>
            <person name="Eser C."/>
            <person name="Geiger H."/>
            <person name="Geisler M."/>
            <person name="Karotki L."/>
            <person name="Kirn A."/>
            <person name="Konantz J."/>
            <person name="Konantz M."/>
            <person name="Oberlander M."/>
            <person name="Rudolph-Geiger S."/>
            <person name="Teucke M."/>
            <person name="Lanz C."/>
            <person name="Raddatz G."/>
            <person name="Osoegawa K."/>
            <person name="Zhu B."/>
            <person name="Rapp A."/>
            <person name="Widaa S."/>
            <person name="Langford C."/>
            <person name="Yang F."/>
            <person name="Schuster S.C."/>
            <person name="Carter N.P."/>
            <person name="Harrow J."/>
            <person name="Ning Z."/>
            <person name="Herrero J."/>
            <person name="Searle S.M."/>
            <person name="Enright A."/>
            <person name="Geisler R."/>
            <person name="Plasterk R.H."/>
            <person name="Lee C."/>
            <person name="Westerfield M."/>
            <person name="de Jong P.J."/>
            <person name="Zon L.I."/>
            <person name="Postlethwait J.H."/>
            <person name="Nusslein-Volhard C."/>
            <person name="Hubbard T.J."/>
            <person name="Roest Crollius H."/>
            <person name="Rogers J."/>
            <person name="Stemple D.L."/>
        </authorList>
    </citation>
    <scope>NUCLEOTIDE SEQUENCE [LARGE SCALE GENOMIC DNA]</scope>
    <source>
        <strain>Tuebingen</strain>
    </source>
</reference>
<reference key="4">
    <citation type="submission" date="2003-11" db="EMBL/GenBank/DDBJ databases">
        <authorList>
            <consortium name="NIH - Zebrafish Gene Collection (ZGC) project"/>
        </authorList>
    </citation>
    <scope>NUCLEOTIDE SEQUENCE [LARGE SCALE MRNA]</scope>
    <source>
        <tissue>Retina</tissue>
    </source>
</reference>
<feature type="chain" id="PRO_0000197775" description="Green-sensitive opsin-1">
    <location>
        <begin position="1"/>
        <end position="349"/>
    </location>
</feature>
<feature type="topological domain" description="Extracellular" evidence="2">
    <location>
        <begin position="1"/>
        <end position="36"/>
    </location>
</feature>
<feature type="transmembrane region" description="Helical; Name=1" evidence="2">
    <location>
        <begin position="37"/>
        <end position="61"/>
    </location>
</feature>
<feature type="topological domain" description="Cytoplasmic" evidence="2">
    <location>
        <begin position="62"/>
        <end position="73"/>
    </location>
</feature>
<feature type="transmembrane region" description="Helical; Name=2" evidence="2">
    <location>
        <begin position="74"/>
        <end position="99"/>
    </location>
</feature>
<feature type="topological domain" description="Extracellular" evidence="2">
    <location>
        <begin position="100"/>
        <end position="113"/>
    </location>
</feature>
<feature type="transmembrane region" description="Helical; Name=3" evidence="2">
    <location>
        <begin position="114"/>
        <end position="133"/>
    </location>
</feature>
<feature type="topological domain" description="Cytoplasmic" evidence="2">
    <location>
        <begin position="134"/>
        <end position="152"/>
    </location>
</feature>
<feature type="transmembrane region" description="Helical; Name=4" evidence="2">
    <location>
        <begin position="153"/>
        <end position="176"/>
    </location>
</feature>
<feature type="topological domain" description="Extracellular" evidence="2">
    <location>
        <begin position="177"/>
        <end position="202"/>
    </location>
</feature>
<feature type="transmembrane region" description="Helical; Name=5" evidence="2">
    <location>
        <begin position="203"/>
        <end position="230"/>
    </location>
</feature>
<feature type="topological domain" description="Cytoplasmic" evidence="2">
    <location>
        <begin position="231"/>
        <end position="252"/>
    </location>
</feature>
<feature type="transmembrane region" description="Helical; Name=6" evidence="2">
    <location>
        <begin position="253"/>
        <end position="276"/>
    </location>
</feature>
<feature type="topological domain" description="Extracellular" evidence="2">
    <location>
        <begin position="277"/>
        <end position="284"/>
    </location>
</feature>
<feature type="transmembrane region" description="Helical; Name=7" evidence="2">
    <location>
        <begin position="285"/>
        <end position="309"/>
    </location>
</feature>
<feature type="topological domain" description="Cytoplasmic" evidence="2">
    <location>
        <begin position="310"/>
        <end position="349"/>
    </location>
</feature>
<feature type="region of interest" description="Disordered" evidence="4">
    <location>
        <begin position="328"/>
        <end position="349"/>
    </location>
</feature>
<feature type="compositionally biased region" description="Low complexity" evidence="4">
    <location>
        <begin position="334"/>
        <end position="349"/>
    </location>
</feature>
<feature type="modified residue" description="N6-(retinylidene)lysine" evidence="1">
    <location>
        <position position="296"/>
    </location>
</feature>
<feature type="glycosylation site" description="N-linked (GlcNAc...) asparagine" evidence="2">
    <location>
        <position position="2"/>
    </location>
</feature>
<feature type="glycosylation site" description="N-linked (GlcNAc...) asparagine" evidence="2">
    <location>
        <position position="15"/>
    </location>
</feature>
<feature type="glycosylation site" description="N-linked (GlcNAc...) asparagine" evidence="2">
    <location>
        <position position="200"/>
    </location>
</feature>
<feature type="disulfide bond" evidence="3">
    <location>
        <begin position="110"/>
        <end position="187"/>
    </location>
</feature>
<feature type="sequence conflict" description="In Ref. 1; AAD24752." evidence="7" ref="1">
    <original>M</original>
    <variation>I</variation>
    <location>
        <position position="288"/>
    </location>
</feature>